<dbReference type="EC" id="3.6.1.41" evidence="1"/>
<dbReference type="EMBL" id="CP000826">
    <property type="protein sequence ID" value="ABV39828.1"/>
    <property type="molecule type" value="Genomic_DNA"/>
</dbReference>
<dbReference type="SMR" id="A8G9N8"/>
<dbReference type="STRING" id="399741.Spro_0722"/>
<dbReference type="KEGG" id="spe:Spro_0722"/>
<dbReference type="eggNOG" id="COG0639">
    <property type="taxonomic scope" value="Bacteria"/>
</dbReference>
<dbReference type="HOGENOM" id="CLU_056184_2_0_6"/>
<dbReference type="OrthoDB" id="9807890at2"/>
<dbReference type="GO" id="GO:0008803">
    <property type="term" value="F:bis(5'-nucleosyl)-tetraphosphatase (symmetrical) activity"/>
    <property type="evidence" value="ECO:0007669"/>
    <property type="project" value="UniProtKB-UniRule"/>
</dbReference>
<dbReference type="CDD" id="cd07422">
    <property type="entry name" value="MPP_ApaH"/>
    <property type="match status" value="1"/>
</dbReference>
<dbReference type="FunFam" id="3.60.21.10:FF:000013">
    <property type="entry name" value="Bis(5'-nucleosyl)-tetraphosphatase, symmetrical"/>
    <property type="match status" value="1"/>
</dbReference>
<dbReference type="Gene3D" id="3.60.21.10">
    <property type="match status" value="1"/>
</dbReference>
<dbReference type="HAMAP" id="MF_00199">
    <property type="entry name" value="ApaH"/>
    <property type="match status" value="1"/>
</dbReference>
<dbReference type="InterPro" id="IPR004617">
    <property type="entry name" value="ApaH"/>
</dbReference>
<dbReference type="InterPro" id="IPR004843">
    <property type="entry name" value="Calcineurin-like_PHP_ApaH"/>
</dbReference>
<dbReference type="InterPro" id="IPR029052">
    <property type="entry name" value="Metallo-depent_PP-like"/>
</dbReference>
<dbReference type="NCBIfam" id="TIGR00668">
    <property type="entry name" value="apaH"/>
    <property type="match status" value="1"/>
</dbReference>
<dbReference type="NCBIfam" id="NF001204">
    <property type="entry name" value="PRK00166.1"/>
    <property type="match status" value="1"/>
</dbReference>
<dbReference type="PANTHER" id="PTHR40942">
    <property type="match status" value="1"/>
</dbReference>
<dbReference type="PANTHER" id="PTHR40942:SF4">
    <property type="entry name" value="CYTOCHROME C5"/>
    <property type="match status" value="1"/>
</dbReference>
<dbReference type="Pfam" id="PF00149">
    <property type="entry name" value="Metallophos"/>
    <property type="match status" value="1"/>
</dbReference>
<dbReference type="PIRSF" id="PIRSF000903">
    <property type="entry name" value="B5n-ttraPtase_sm"/>
    <property type="match status" value="1"/>
</dbReference>
<dbReference type="SUPFAM" id="SSF56300">
    <property type="entry name" value="Metallo-dependent phosphatases"/>
    <property type="match status" value="1"/>
</dbReference>
<sequence length="283" mass="31534">MSTYLIGDVHGCFDELKSLLAQVAFDPQQDQLWLTGDLVARGPGSLDVLRYVRSLGPAVRMVLGNHDLHLLAVYAGISRNKPKDRITPLLEAPDADELINWLRRQPVLQVDEQLKLVMAHAGITPQWDIETAQLCAREVEAVLSSDSYPLFLDAMYGDMPNNWSPELSGLARLRFSTNALTRMRYCFPNGQLDMICKDAPGTAPAPLKPWFELPRLVDADYTIIFGHWASLEGRGTPAGVIGLDTGCCWGGDLTMLRWEDQQYFTQPANRRDLLDGVHQQAAS</sequence>
<organism>
    <name type="scientific">Serratia proteamaculans (strain 568)</name>
    <dbReference type="NCBI Taxonomy" id="399741"/>
    <lineage>
        <taxon>Bacteria</taxon>
        <taxon>Pseudomonadati</taxon>
        <taxon>Pseudomonadota</taxon>
        <taxon>Gammaproteobacteria</taxon>
        <taxon>Enterobacterales</taxon>
        <taxon>Yersiniaceae</taxon>
        <taxon>Serratia</taxon>
    </lineage>
</organism>
<proteinExistence type="inferred from homology"/>
<accession>A8G9N8</accession>
<name>APAH_SERP5</name>
<feature type="chain" id="PRO_1000058559" description="Bis(5'-nucleosyl)-tetraphosphatase, symmetrical">
    <location>
        <begin position="1"/>
        <end position="283"/>
    </location>
</feature>
<reference key="1">
    <citation type="submission" date="2007-09" db="EMBL/GenBank/DDBJ databases">
        <title>Complete sequence of chromosome of Serratia proteamaculans 568.</title>
        <authorList>
            <consortium name="US DOE Joint Genome Institute"/>
            <person name="Copeland A."/>
            <person name="Lucas S."/>
            <person name="Lapidus A."/>
            <person name="Barry K."/>
            <person name="Glavina del Rio T."/>
            <person name="Dalin E."/>
            <person name="Tice H."/>
            <person name="Pitluck S."/>
            <person name="Chain P."/>
            <person name="Malfatti S."/>
            <person name="Shin M."/>
            <person name="Vergez L."/>
            <person name="Schmutz J."/>
            <person name="Larimer F."/>
            <person name="Land M."/>
            <person name="Hauser L."/>
            <person name="Kyrpides N."/>
            <person name="Kim E."/>
            <person name="Taghavi S."/>
            <person name="Newman L."/>
            <person name="Vangronsveld J."/>
            <person name="van der Lelie D."/>
            <person name="Richardson P."/>
        </authorList>
    </citation>
    <scope>NUCLEOTIDE SEQUENCE [LARGE SCALE GENOMIC DNA]</scope>
    <source>
        <strain>568</strain>
    </source>
</reference>
<gene>
    <name evidence="1" type="primary">apaH</name>
    <name type="ordered locus">Spro_0722</name>
</gene>
<comment type="function">
    <text evidence="1">Hydrolyzes diadenosine 5',5'''-P1,P4-tetraphosphate to yield ADP.</text>
</comment>
<comment type="catalytic activity">
    <reaction evidence="1">
        <text>P(1),P(4)-bis(5'-adenosyl) tetraphosphate + H2O = 2 ADP + 2 H(+)</text>
        <dbReference type="Rhea" id="RHEA:24252"/>
        <dbReference type="ChEBI" id="CHEBI:15377"/>
        <dbReference type="ChEBI" id="CHEBI:15378"/>
        <dbReference type="ChEBI" id="CHEBI:58141"/>
        <dbReference type="ChEBI" id="CHEBI:456216"/>
        <dbReference type="EC" id="3.6.1.41"/>
    </reaction>
</comment>
<comment type="similarity">
    <text evidence="1">Belongs to the Ap4A hydrolase family.</text>
</comment>
<keyword id="KW-0378">Hydrolase</keyword>
<protein>
    <recommendedName>
        <fullName evidence="1">Bis(5'-nucleosyl)-tetraphosphatase, symmetrical</fullName>
        <ecNumber evidence="1">3.6.1.41</ecNumber>
    </recommendedName>
    <alternativeName>
        <fullName evidence="1">Ap4A hydrolase</fullName>
    </alternativeName>
    <alternativeName>
        <fullName evidence="1">Diadenosine 5',5'''-P1,P4-tetraphosphate pyrophosphohydrolase</fullName>
    </alternativeName>
    <alternativeName>
        <fullName evidence="1">Diadenosine tetraphosphatase</fullName>
    </alternativeName>
</protein>
<evidence type="ECO:0000255" key="1">
    <source>
        <dbReference type="HAMAP-Rule" id="MF_00199"/>
    </source>
</evidence>